<organism>
    <name type="scientific">Rickettsia bellii (strain RML369-C)</name>
    <dbReference type="NCBI Taxonomy" id="336407"/>
    <lineage>
        <taxon>Bacteria</taxon>
        <taxon>Pseudomonadati</taxon>
        <taxon>Pseudomonadota</taxon>
        <taxon>Alphaproteobacteria</taxon>
        <taxon>Rickettsiales</taxon>
        <taxon>Rickettsiaceae</taxon>
        <taxon>Rickettsieae</taxon>
        <taxon>Rickettsia</taxon>
        <taxon>belli group</taxon>
    </lineage>
</organism>
<accession>Q1RHN4</accession>
<gene>
    <name evidence="1" type="primary">rpsN</name>
    <name type="ordered locus">RBE_1049</name>
</gene>
<evidence type="ECO:0000255" key="1">
    <source>
        <dbReference type="HAMAP-Rule" id="MF_00537"/>
    </source>
</evidence>
<evidence type="ECO:0000256" key="2">
    <source>
        <dbReference type="SAM" id="MobiDB-lite"/>
    </source>
</evidence>
<evidence type="ECO:0000305" key="3"/>
<proteinExistence type="inferred from homology"/>
<reference key="1">
    <citation type="journal article" date="2006" name="PLoS Genet.">
        <title>Genome sequence of Rickettsia bellii illuminates the role of amoebae in gene exchanges between intracellular pathogens.</title>
        <authorList>
            <person name="Ogata H."/>
            <person name="La Scola B."/>
            <person name="Audic S."/>
            <person name="Renesto P."/>
            <person name="Blanc G."/>
            <person name="Robert C."/>
            <person name="Fournier P.-E."/>
            <person name="Claverie J.-M."/>
            <person name="Raoult D."/>
        </authorList>
    </citation>
    <scope>NUCLEOTIDE SEQUENCE [LARGE SCALE GENOMIC DNA]</scope>
    <source>
        <strain>RML369-C</strain>
    </source>
</reference>
<feature type="chain" id="PRO_0000277948" description="Small ribosomal subunit protein uS14">
    <location>
        <begin position="1"/>
        <end position="101"/>
    </location>
</feature>
<feature type="region of interest" description="Disordered" evidence="2">
    <location>
        <begin position="1"/>
        <end position="24"/>
    </location>
</feature>
<feature type="compositionally biased region" description="Basic residues" evidence="2">
    <location>
        <begin position="10"/>
        <end position="24"/>
    </location>
</feature>
<name>RS14_RICBR</name>
<comment type="function">
    <text evidence="1">Binds 16S rRNA, required for the assembly of 30S particles and may also be responsible for determining the conformation of the 16S rRNA at the A site.</text>
</comment>
<comment type="subunit">
    <text evidence="1">Part of the 30S ribosomal subunit. Contacts proteins S3 and S10.</text>
</comment>
<comment type="similarity">
    <text evidence="1">Belongs to the universal ribosomal protein uS14 family.</text>
</comment>
<sequence length="101" mass="11652">MAKVSSIKKNEKRKKLSQSLHNKREKLKNKIYDKNISLEERFSLVMSLAQLSRNSSATRIRNRCELTGRPRGVIRKFGISRNKLRELSGRGLVPGIIKSSW</sequence>
<protein>
    <recommendedName>
        <fullName evidence="1">Small ribosomal subunit protein uS14</fullName>
    </recommendedName>
    <alternativeName>
        <fullName evidence="3">30S ribosomal protein S14</fullName>
    </alternativeName>
</protein>
<dbReference type="EMBL" id="CP000087">
    <property type="protein sequence ID" value="ABE05130.1"/>
    <property type="molecule type" value="Genomic_DNA"/>
</dbReference>
<dbReference type="RefSeq" id="WP_011477708.1">
    <property type="nucleotide sequence ID" value="NC_007940.1"/>
</dbReference>
<dbReference type="SMR" id="Q1RHN4"/>
<dbReference type="KEGG" id="rbe:RBE_1049"/>
<dbReference type="eggNOG" id="COG0199">
    <property type="taxonomic scope" value="Bacteria"/>
</dbReference>
<dbReference type="HOGENOM" id="CLU_139869_0_1_5"/>
<dbReference type="OrthoDB" id="9810484at2"/>
<dbReference type="Proteomes" id="UP000001951">
    <property type="component" value="Chromosome"/>
</dbReference>
<dbReference type="GO" id="GO:0005737">
    <property type="term" value="C:cytoplasm"/>
    <property type="evidence" value="ECO:0007669"/>
    <property type="project" value="UniProtKB-ARBA"/>
</dbReference>
<dbReference type="GO" id="GO:0015935">
    <property type="term" value="C:small ribosomal subunit"/>
    <property type="evidence" value="ECO:0007669"/>
    <property type="project" value="TreeGrafter"/>
</dbReference>
<dbReference type="GO" id="GO:0019843">
    <property type="term" value="F:rRNA binding"/>
    <property type="evidence" value="ECO:0007669"/>
    <property type="project" value="UniProtKB-UniRule"/>
</dbReference>
<dbReference type="GO" id="GO:0003735">
    <property type="term" value="F:structural constituent of ribosome"/>
    <property type="evidence" value="ECO:0007669"/>
    <property type="project" value="InterPro"/>
</dbReference>
<dbReference type="GO" id="GO:0006412">
    <property type="term" value="P:translation"/>
    <property type="evidence" value="ECO:0007669"/>
    <property type="project" value="UniProtKB-UniRule"/>
</dbReference>
<dbReference type="FunFam" id="1.10.287.1480:FF:000001">
    <property type="entry name" value="30S ribosomal protein S14"/>
    <property type="match status" value="1"/>
</dbReference>
<dbReference type="Gene3D" id="1.10.287.1480">
    <property type="match status" value="1"/>
</dbReference>
<dbReference type="HAMAP" id="MF_00537">
    <property type="entry name" value="Ribosomal_uS14_1"/>
    <property type="match status" value="1"/>
</dbReference>
<dbReference type="InterPro" id="IPR001209">
    <property type="entry name" value="Ribosomal_uS14"/>
</dbReference>
<dbReference type="InterPro" id="IPR023036">
    <property type="entry name" value="Ribosomal_uS14_bac/plastid"/>
</dbReference>
<dbReference type="InterPro" id="IPR018271">
    <property type="entry name" value="Ribosomal_uS14_CS"/>
</dbReference>
<dbReference type="NCBIfam" id="NF006477">
    <property type="entry name" value="PRK08881.1"/>
    <property type="match status" value="1"/>
</dbReference>
<dbReference type="PANTHER" id="PTHR19836">
    <property type="entry name" value="30S RIBOSOMAL PROTEIN S14"/>
    <property type="match status" value="1"/>
</dbReference>
<dbReference type="PANTHER" id="PTHR19836:SF19">
    <property type="entry name" value="SMALL RIBOSOMAL SUBUNIT PROTEIN US14M"/>
    <property type="match status" value="1"/>
</dbReference>
<dbReference type="Pfam" id="PF00253">
    <property type="entry name" value="Ribosomal_S14"/>
    <property type="match status" value="1"/>
</dbReference>
<dbReference type="SUPFAM" id="SSF57716">
    <property type="entry name" value="Glucocorticoid receptor-like (DNA-binding domain)"/>
    <property type="match status" value="1"/>
</dbReference>
<dbReference type="PROSITE" id="PS00527">
    <property type="entry name" value="RIBOSOMAL_S14"/>
    <property type="match status" value="1"/>
</dbReference>
<keyword id="KW-0687">Ribonucleoprotein</keyword>
<keyword id="KW-0689">Ribosomal protein</keyword>
<keyword id="KW-0694">RNA-binding</keyword>
<keyword id="KW-0699">rRNA-binding</keyword>